<evidence type="ECO:0000255" key="1">
    <source>
        <dbReference type="HAMAP-Rule" id="MF_01813"/>
    </source>
</evidence>
<proteinExistence type="inferred from homology"/>
<sequence length="243" mass="26955">MSKTHFGFETVEENEKAKKVAGVFHSVASNYDLMNDLMSAGLHRAWKAFTIAQANVRPGGKVLDIAAGTGDLTKAFAKAAGPTGEVWHTDINESMLRVGRDRLLDKGVVTPSLLCDAEKLPFPDNYFDVVTVAFGLRNMTHKDSALAEMRRVAKPGGRVMVLEFSKVWEPLKKAYDVYSFKVLPWLGDKFAKDADSYRYLAESIRMHPDQETLKTMMEQAGLDAVKYYNLSGGVVALHVGTKY</sequence>
<protein>
    <recommendedName>
        <fullName evidence="1">Ubiquinone/menaquinone biosynthesis C-methyltransferase UbiE</fullName>
        <ecNumber evidence="1">2.1.1.163</ecNumber>
        <ecNumber evidence="1">2.1.1.201</ecNumber>
    </recommendedName>
    <alternativeName>
        <fullName evidence="1">2-methoxy-6-polyprenyl-1,4-benzoquinol methylase</fullName>
    </alternativeName>
    <alternativeName>
        <fullName evidence="1">Demethylmenaquinone methyltransferase</fullName>
    </alternativeName>
</protein>
<name>UBIE_BURP0</name>
<dbReference type="EC" id="2.1.1.163" evidence="1"/>
<dbReference type="EC" id="2.1.1.201" evidence="1"/>
<dbReference type="EMBL" id="CP000572">
    <property type="protein sequence ID" value="ABN91257.1"/>
    <property type="molecule type" value="Genomic_DNA"/>
</dbReference>
<dbReference type="RefSeq" id="WP_004189973.1">
    <property type="nucleotide sequence ID" value="NC_009076.1"/>
</dbReference>
<dbReference type="SMR" id="A3NRJ4"/>
<dbReference type="GeneID" id="93059149"/>
<dbReference type="KEGG" id="bpl:BURPS1106A_0683"/>
<dbReference type="HOGENOM" id="CLU_037990_0_0_4"/>
<dbReference type="UniPathway" id="UPA00079">
    <property type="reaction ID" value="UER00169"/>
</dbReference>
<dbReference type="UniPathway" id="UPA00232"/>
<dbReference type="Proteomes" id="UP000006738">
    <property type="component" value="Chromosome I"/>
</dbReference>
<dbReference type="GO" id="GO:0008425">
    <property type="term" value="F:2-methoxy-6-polyprenyl-1,4-benzoquinol methyltransferase activity"/>
    <property type="evidence" value="ECO:0007669"/>
    <property type="project" value="UniProtKB-UniRule"/>
</dbReference>
<dbReference type="GO" id="GO:0043770">
    <property type="term" value="F:demethylmenaquinone methyltransferase activity"/>
    <property type="evidence" value="ECO:0007669"/>
    <property type="project" value="UniProtKB-UniRule"/>
</dbReference>
<dbReference type="GO" id="GO:0009060">
    <property type="term" value="P:aerobic respiration"/>
    <property type="evidence" value="ECO:0007669"/>
    <property type="project" value="UniProtKB-UniRule"/>
</dbReference>
<dbReference type="GO" id="GO:0009234">
    <property type="term" value="P:menaquinone biosynthetic process"/>
    <property type="evidence" value="ECO:0007669"/>
    <property type="project" value="UniProtKB-UniRule"/>
</dbReference>
<dbReference type="GO" id="GO:0032259">
    <property type="term" value="P:methylation"/>
    <property type="evidence" value="ECO:0007669"/>
    <property type="project" value="UniProtKB-KW"/>
</dbReference>
<dbReference type="CDD" id="cd02440">
    <property type="entry name" value="AdoMet_MTases"/>
    <property type="match status" value="1"/>
</dbReference>
<dbReference type="Gene3D" id="3.40.50.150">
    <property type="entry name" value="Vaccinia Virus protein VP39"/>
    <property type="match status" value="1"/>
</dbReference>
<dbReference type="HAMAP" id="MF_01813">
    <property type="entry name" value="MenG_UbiE_methyltr"/>
    <property type="match status" value="1"/>
</dbReference>
<dbReference type="InterPro" id="IPR029063">
    <property type="entry name" value="SAM-dependent_MTases_sf"/>
</dbReference>
<dbReference type="InterPro" id="IPR004033">
    <property type="entry name" value="UbiE/COQ5_MeTrFase"/>
</dbReference>
<dbReference type="InterPro" id="IPR023576">
    <property type="entry name" value="UbiE/COQ5_MeTrFase_CS"/>
</dbReference>
<dbReference type="NCBIfam" id="TIGR01934">
    <property type="entry name" value="MenG_MenH_UbiE"/>
    <property type="match status" value="1"/>
</dbReference>
<dbReference type="NCBIfam" id="NF001240">
    <property type="entry name" value="PRK00216.1-1"/>
    <property type="match status" value="1"/>
</dbReference>
<dbReference type="NCBIfam" id="NF001244">
    <property type="entry name" value="PRK00216.1-5"/>
    <property type="match status" value="1"/>
</dbReference>
<dbReference type="PANTHER" id="PTHR43591:SF24">
    <property type="entry name" value="2-METHOXY-6-POLYPRENYL-1,4-BENZOQUINOL METHYLASE, MITOCHONDRIAL"/>
    <property type="match status" value="1"/>
</dbReference>
<dbReference type="PANTHER" id="PTHR43591">
    <property type="entry name" value="METHYLTRANSFERASE"/>
    <property type="match status" value="1"/>
</dbReference>
<dbReference type="Pfam" id="PF01209">
    <property type="entry name" value="Ubie_methyltran"/>
    <property type="match status" value="1"/>
</dbReference>
<dbReference type="SUPFAM" id="SSF53335">
    <property type="entry name" value="S-adenosyl-L-methionine-dependent methyltransferases"/>
    <property type="match status" value="1"/>
</dbReference>
<dbReference type="PROSITE" id="PS51608">
    <property type="entry name" value="SAM_MT_UBIE"/>
    <property type="match status" value="1"/>
</dbReference>
<dbReference type="PROSITE" id="PS01183">
    <property type="entry name" value="UBIE_1"/>
    <property type="match status" value="1"/>
</dbReference>
<gene>
    <name evidence="1" type="primary">ubiE</name>
    <name type="ordered locus">BURPS1106A_0683</name>
</gene>
<feature type="chain" id="PRO_1000056231" description="Ubiquinone/menaquinone biosynthesis C-methyltransferase UbiE">
    <location>
        <begin position="1"/>
        <end position="243"/>
    </location>
</feature>
<feature type="binding site" evidence="1">
    <location>
        <position position="69"/>
    </location>
    <ligand>
        <name>S-adenosyl-L-methionine</name>
        <dbReference type="ChEBI" id="CHEBI:59789"/>
    </ligand>
</feature>
<feature type="binding site" evidence="1">
    <location>
        <position position="90"/>
    </location>
    <ligand>
        <name>S-adenosyl-L-methionine</name>
        <dbReference type="ChEBI" id="CHEBI:59789"/>
    </ligand>
</feature>
<feature type="binding site" evidence="1">
    <location>
        <begin position="116"/>
        <end position="117"/>
    </location>
    <ligand>
        <name>S-adenosyl-L-methionine</name>
        <dbReference type="ChEBI" id="CHEBI:59789"/>
    </ligand>
</feature>
<accession>A3NRJ4</accession>
<comment type="function">
    <text evidence="1">Methyltransferase required for the conversion of demethylmenaquinol (DMKH2) to menaquinol (MKH2) and the conversion of 2-polyprenyl-6-methoxy-1,4-benzoquinol (DDMQH2) to 2-polyprenyl-3-methyl-6-methoxy-1,4-benzoquinol (DMQH2).</text>
</comment>
<comment type="catalytic activity">
    <reaction evidence="1">
        <text>a 2-demethylmenaquinol + S-adenosyl-L-methionine = a menaquinol + S-adenosyl-L-homocysteine + H(+)</text>
        <dbReference type="Rhea" id="RHEA:42640"/>
        <dbReference type="Rhea" id="RHEA-COMP:9539"/>
        <dbReference type="Rhea" id="RHEA-COMP:9563"/>
        <dbReference type="ChEBI" id="CHEBI:15378"/>
        <dbReference type="ChEBI" id="CHEBI:18151"/>
        <dbReference type="ChEBI" id="CHEBI:55437"/>
        <dbReference type="ChEBI" id="CHEBI:57856"/>
        <dbReference type="ChEBI" id="CHEBI:59789"/>
        <dbReference type="EC" id="2.1.1.163"/>
    </reaction>
</comment>
<comment type="catalytic activity">
    <reaction evidence="1">
        <text>a 2-methoxy-6-(all-trans-polyprenyl)benzene-1,4-diol + S-adenosyl-L-methionine = a 5-methoxy-2-methyl-3-(all-trans-polyprenyl)benzene-1,4-diol + S-adenosyl-L-homocysteine + H(+)</text>
        <dbReference type="Rhea" id="RHEA:28286"/>
        <dbReference type="Rhea" id="RHEA-COMP:10858"/>
        <dbReference type="Rhea" id="RHEA-COMP:10859"/>
        <dbReference type="ChEBI" id="CHEBI:15378"/>
        <dbReference type="ChEBI" id="CHEBI:57856"/>
        <dbReference type="ChEBI" id="CHEBI:59789"/>
        <dbReference type="ChEBI" id="CHEBI:84166"/>
        <dbReference type="ChEBI" id="CHEBI:84167"/>
        <dbReference type="EC" id="2.1.1.201"/>
    </reaction>
</comment>
<comment type="pathway">
    <text evidence="1">Quinol/quinone metabolism; menaquinone biosynthesis; menaquinol from 1,4-dihydroxy-2-naphthoate: step 2/2.</text>
</comment>
<comment type="pathway">
    <text evidence="1">Cofactor biosynthesis; ubiquinone biosynthesis.</text>
</comment>
<comment type="similarity">
    <text evidence="1">Belongs to the class I-like SAM-binding methyltransferase superfamily. MenG/UbiE family.</text>
</comment>
<reference key="1">
    <citation type="journal article" date="2010" name="Genome Biol. Evol.">
        <title>Continuing evolution of Burkholderia mallei through genome reduction and large-scale rearrangements.</title>
        <authorList>
            <person name="Losada L."/>
            <person name="Ronning C.M."/>
            <person name="DeShazer D."/>
            <person name="Woods D."/>
            <person name="Fedorova N."/>
            <person name="Kim H.S."/>
            <person name="Shabalina S.A."/>
            <person name="Pearson T.R."/>
            <person name="Brinkac L."/>
            <person name="Tan P."/>
            <person name="Nandi T."/>
            <person name="Crabtree J."/>
            <person name="Badger J."/>
            <person name="Beckstrom-Sternberg S."/>
            <person name="Saqib M."/>
            <person name="Schutzer S.E."/>
            <person name="Keim P."/>
            <person name="Nierman W.C."/>
        </authorList>
    </citation>
    <scope>NUCLEOTIDE SEQUENCE [LARGE SCALE GENOMIC DNA]</scope>
    <source>
        <strain>1106a</strain>
    </source>
</reference>
<keyword id="KW-0474">Menaquinone biosynthesis</keyword>
<keyword id="KW-0489">Methyltransferase</keyword>
<keyword id="KW-0949">S-adenosyl-L-methionine</keyword>
<keyword id="KW-0808">Transferase</keyword>
<keyword id="KW-0831">Ubiquinone biosynthesis</keyword>
<organism>
    <name type="scientific">Burkholderia pseudomallei (strain 1106a)</name>
    <dbReference type="NCBI Taxonomy" id="357348"/>
    <lineage>
        <taxon>Bacteria</taxon>
        <taxon>Pseudomonadati</taxon>
        <taxon>Pseudomonadota</taxon>
        <taxon>Betaproteobacteria</taxon>
        <taxon>Burkholderiales</taxon>
        <taxon>Burkholderiaceae</taxon>
        <taxon>Burkholderia</taxon>
        <taxon>pseudomallei group</taxon>
    </lineage>
</organism>